<reference key="1">
    <citation type="journal article" date="2002" name="Nature">
        <title>Sequence and analysis of rice chromosome 4.</title>
        <authorList>
            <person name="Feng Q."/>
            <person name="Zhang Y."/>
            <person name="Hao P."/>
            <person name="Wang S."/>
            <person name="Fu G."/>
            <person name="Huang Y."/>
            <person name="Li Y."/>
            <person name="Zhu J."/>
            <person name="Liu Y."/>
            <person name="Hu X."/>
            <person name="Jia P."/>
            <person name="Zhang Y."/>
            <person name="Zhao Q."/>
            <person name="Ying K."/>
            <person name="Yu S."/>
            <person name="Tang Y."/>
            <person name="Weng Q."/>
            <person name="Zhang L."/>
            <person name="Lu Y."/>
            <person name="Mu J."/>
            <person name="Lu Y."/>
            <person name="Zhang L.S."/>
            <person name="Yu Z."/>
            <person name="Fan D."/>
            <person name="Liu X."/>
            <person name="Lu T."/>
            <person name="Li C."/>
            <person name="Wu Y."/>
            <person name="Sun T."/>
            <person name="Lei H."/>
            <person name="Li T."/>
            <person name="Hu H."/>
            <person name="Guan J."/>
            <person name="Wu M."/>
            <person name="Zhang R."/>
            <person name="Zhou B."/>
            <person name="Chen Z."/>
            <person name="Chen L."/>
            <person name="Jin Z."/>
            <person name="Wang R."/>
            <person name="Yin H."/>
            <person name="Cai Z."/>
            <person name="Ren S."/>
            <person name="Lv G."/>
            <person name="Gu W."/>
            <person name="Zhu G."/>
            <person name="Tu Y."/>
            <person name="Jia J."/>
            <person name="Zhang Y."/>
            <person name="Chen J."/>
            <person name="Kang H."/>
            <person name="Chen X."/>
            <person name="Shao C."/>
            <person name="Sun Y."/>
            <person name="Hu Q."/>
            <person name="Zhang X."/>
            <person name="Zhang W."/>
            <person name="Wang L."/>
            <person name="Ding C."/>
            <person name="Sheng H."/>
            <person name="Gu J."/>
            <person name="Chen S."/>
            <person name="Ni L."/>
            <person name="Zhu F."/>
            <person name="Chen W."/>
            <person name="Lan L."/>
            <person name="Lai Y."/>
            <person name="Cheng Z."/>
            <person name="Gu M."/>
            <person name="Jiang J."/>
            <person name="Li J."/>
            <person name="Hong G."/>
            <person name="Xue Y."/>
            <person name="Han B."/>
        </authorList>
    </citation>
    <scope>NUCLEOTIDE SEQUENCE [LARGE SCALE GENOMIC DNA]</scope>
    <source>
        <strain>cv. Nipponbare</strain>
    </source>
</reference>
<reference key="2">
    <citation type="journal article" date="2005" name="Nature">
        <title>The map-based sequence of the rice genome.</title>
        <authorList>
            <consortium name="International rice genome sequencing project (IRGSP)"/>
        </authorList>
    </citation>
    <scope>NUCLEOTIDE SEQUENCE [LARGE SCALE GENOMIC DNA]</scope>
    <source>
        <strain>cv. Nipponbare</strain>
    </source>
</reference>
<reference key="3">
    <citation type="journal article" date="2008" name="Nucleic Acids Res.">
        <title>The rice annotation project database (RAP-DB): 2008 update.</title>
        <authorList>
            <consortium name="The rice annotation project (RAP)"/>
        </authorList>
    </citation>
    <scope>GENOME REANNOTATION</scope>
    <source>
        <strain>cv. Nipponbare</strain>
    </source>
</reference>
<reference key="4">
    <citation type="journal article" date="2013" name="Rice">
        <title>Improvement of the Oryza sativa Nipponbare reference genome using next generation sequence and optical map data.</title>
        <authorList>
            <person name="Kawahara Y."/>
            <person name="de la Bastide M."/>
            <person name="Hamilton J.P."/>
            <person name="Kanamori H."/>
            <person name="McCombie W.R."/>
            <person name="Ouyang S."/>
            <person name="Schwartz D.C."/>
            <person name="Tanaka T."/>
            <person name="Wu J."/>
            <person name="Zhou S."/>
            <person name="Childs K.L."/>
            <person name="Davidson R.M."/>
            <person name="Lin H."/>
            <person name="Quesada-Ocampo L."/>
            <person name="Vaillancourt B."/>
            <person name="Sakai H."/>
            <person name="Lee S.S."/>
            <person name="Kim J."/>
            <person name="Numa H."/>
            <person name="Itoh T."/>
            <person name="Buell C.R."/>
            <person name="Matsumoto T."/>
        </authorList>
    </citation>
    <scope>GENOME REANNOTATION</scope>
    <source>
        <strain>cv. Nipponbare</strain>
    </source>
</reference>
<reference key="5">
    <citation type="journal article" date="2005" name="PLoS Biol.">
        <title>The genomes of Oryza sativa: a history of duplications.</title>
        <authorList>
            <person name="Yu J."/>
            <person name="Wang J."/>
            <person name="Lin W."/>
            <person name="Li S."/>
            <person name="Li H."/>
            <person name="Zhou J."/>
            <person name="Ni P."/>
            <person name="Dong W."/>
            <person name="Hu S."/>
            <person name="Zeng C."/>
            <person name="Zhang J."/>
            <person name="Zhang Y."/>
            <person name="Li R."/>
            <person name="Xu Z."/>
            <person name="Li S."/>
            <person name="Li X."/>
            <person name="Zheng H."/>
            <person name="Cong L."/>
            <person name="Lin L."/>
            <person name="Yin J."/>
            <person name="Geng J."/>
            <person name="Li G."/>
            <person name="Shi J."/>
            <person name="Liu J."/>
            <person name="Lv H."/>
            <person name="Li J."/>
            <person name="Wang J."/>
            <person name="Deng Y."/>
            <person name="Ran L."/>
            <person name="Shi X."/>
            <person name="Wang X."/>
            <person name="Wu Q."/>
            <person name="Li C."/>
            <person name="Ren X."/>
            <person name="Wang J."/>
            <person name="Wang X."/>
            <person name="Li D."/>
            <person name="Liu D."/>
            <person name="Zhang X."/>
            <person name="Ji Z."/>
            <person name="Zhao W."/>
            <person name="Sun Y."/>
            <person name="Zhang Z."/>
            <person name="Bao J."/>
            <person name="Han Y."/>
            <person name="Dong L."/>
            <person name="Ji J."/>
            <person name="Chen P."/>
            <person name="Wu S."/>
            <person name="Liu J."/>
            <person name="Xiao Y."/>
            <person name="Bu D."/>
            <person name="Tan J."/>
            <person name="Yang L."/>
            <person name="Ye C."/>
            <person name="Zhang J."/>
            <person name="Xu J."/>
            <person name="Zhou Y."/>
            <person name="Yu Y."/>
            <person name="Zhang B."/>
            <person name="Zhuang S."/>
            <person name="Wei H."/>
            <person name="Liu B."/>
            <person name="Lei M."/>
            <person name="Yu H."/>
            <person name="Li Y."/>
            <person name="Xu H."/>
            <person name="Wei S."/>
            <person name="He X."/>
            <person name="Fang L."/>
            <person name="Zhang Z."/>
            <person name="Zhang Y."/>
            <person name="Huang X."/>
            <person name="Su Z."/>
            <person name="Tong W."/>
            <person name="Li J."/>
            <person name="Tong Z."/>
            <person name="Li S."/>
            <person name="Ye J."/>
            <person name="Wang L."/>
            <person name="Fang L."/>
            <person name="Lei T."/>
            <person name="Chen C.-S."/>
            <person name="Chen H.-C."/>
            <person name="Xu Z."/>
            <person name="Li H."/>
            <person name="Huang H."/>
            <person name="Zhang F."/>
            <person name="Xu H."/>
            <person name="Li N."/>
            <person name="Zhao C."/>
            <person name="Li S."/>
            <person name="Dong L."/>
            <person name="Huang Y."/>
            <person name="Li L."/>
            <person name="Xi Y."/>
            <person name="Qi Q."/>
            <person name="Li W."/>
            <person name="Zhang B."/>
            <person name="Hu W."/>
            <person name="Zhang Y."/>
            <person name="Tian X."/>
            <person name="Jiao Y."/>
            <person name="Liang X."/>
            <person name="Jin J."/>
            <person name="Gao L."/>
            <person name="Zheng W."/>
            <person name="Hao B."/>
            <person name="Liu S.-M."/>
            <person name="Wang W."/>
            <person name="Yuan L."/>
            <person name="Cao M."/>
            <person name="McDermott J."/>
            <person name="Samudrala R."/>
            <person name="Wang J."/>
            <person name="Wong G.K.-S."/>
            <person name="Yang H."/>
        </authorList>
    </citation>
    <scope>NUCLEOTIDE SEQUENCE [LARGE SCALE GENOMIC DNA]</scope>
    <source>
        <strain>cv. Nipponbare</strain>
    </source>
</reference>
<reference key="6">
    <citation type="submission" date="2006-10" db="EMBL/GenBank/DDBJ databases">
        <title>Oryza sativa full length cDNA.</title>
        <authorList>
            <consortium name="The rice full-length cDNA consortium"/>
        </authorList>
    </citation>
    <scope>NUCLEOTIDE SEQUENCE [LARGE SCALE MRNA]</scope>
    <source>
        <strain>cv. Nipponbare</strain>
    </source>
</reference>
<feature type="chain" id="PRO_0000411016" description="Vacuolar iron transporter homolog 5">
    <location>
        <begin position="1"/>
        <end position="208"/>
    </location>
</feature>
<feature type="topological domain" description="Cytoplasmic" evidence="3">
    <location>
        <begin position="1"/>
        <end position="41"/>
    </location>
</feature>
<feature type="transmembrane region" description="Helical" evidence="3">
    <location>
        <begin position="42"/>
        <end position="62"/>
    </location>
</feature>
<feature type="topological domain" description="Vacuolar" evidence="3">
    <location>
        <begin position="63"/>
        <end position="69"/>
    </location>
</feature>
<feature type="transmembrane region" description="Helical" evidence="3">
    <location>
        <begin position="70"/>
        <end position="90"/>
    </location>
</feature>
<feature type="topological domain" description="Cytoplasmic" evidence="3">
    <location>
        <begin position="91"/>
        <end position="125"/>
    </location>
</feature>
<feature type="transmembrane region" description="Helical" evidence="3">
    <location>
        <begin position="126"/>
        <end position="146"/>
    </location>
</feature>
<feature type="topological domain" description="Vacuolar" evidence="3">
    <location>
        <begin position="147"/>
        <end position="151"/>
    </location>
</feature>
<feature type="transmembrane region" description="Helical" evidence="3">
    <location>
        <begin position="152"/>
        <end position="172"/>
    </location>
</feature>
<feature type="topological domain" description="Cytoplasmic" evidence="3">
    <location>
        <begin position="173"/>
        <end position="184"/>
    </location>
</feature>
<feature type="transmembrane region" description="Helical" evidence="3">
    <location>
        <begin position="185"/>
        <end position="205"/>
    </location>
</feature>
<feature type="topological domain" description="Vacuolar" evidence="3">
    <location>
        <begin position="206"/>
        <end position="208"/>
    </location>
</feature>
<dbReference type="EMBL" id="AL606686">
    <property type="protein sequence ID" value="CAD41933.2"/>
    <property type="status" value="ALT_FRAME"/>
    <property type="molecule type" value="Genomic_DNA"/>
</dbReference>
<dbReference type="EMBL" id="AP008210">
    <property type="protein sequence ID" value="BAF16244.2"/>
    <property type="status" value="ALT_FRAME"/>
    <property type="molecule type" value="Genomic_DNA"/>
</dbReference>
<dbReference type="EMBL" id="AP014960">
    <property type="protein sequence ID" value="BAS91743.1"/>
    <property type="molecule type" value="Genomic_DNA"/>
</dbReference>
<dbReference type="EMBL" id="CM000141">
    <property type="protein sequence ID" value="EAZ32489.1"/>
    <property type="molecule type" value="Genomic_DNA"/>
</dbReference>
<dbReference type="EMBL" id="AK243145">
    <property type="status" value="NOT_ANNOTATED_CDS"/>
    <property type="molecule type" value="mRNA"/>
</dbReference>
<dbReference type="RefSeq" id="XP_015634483.1">
    <property type="nucleotide sequence ID" value="XM_015778997.1"/>
</dbReference>
<dbReference type="SMR" id="Q7XTL7"/>
<dbReference type="STRING" id="39947.Q7XTL7"/>
<dbReference type="PaxDb" id="39947-Q7XTL7"/>
<dbReference type="EnsemblPlants" id="Os04t0686800-01">
    <property type="protein sequence ID" value="Os04t0686800-01"/>
    <property type="gene ID" value="Os04g0686800"/>
</dbReference>
<dbReference type="Gramene" id="Os04t0686800-01">
    <property type="protein sequence ID" value="Os04t0686800-01"/>
    <property type="gene ID" value="Os04g0686800"/>
</dbReference>
<dbReference type="KEGG" id="dosa:Os04g0686800"/>
<dbReference type="eggNOG" id="KOG4473">
    <property type="taxonomic scope" value="Eukaryota"/>
</dbReference>
<dbReference type="HOGENOM" id="CLU_038957_5_1_1"/>
<dbReference type="InParanoid" id="Q7XTL7"/>
<dbReference type="OMA" id="NDCHDIE"/>
<dbReference type="OrthoDB" id="73465at2759"/>
<dbReference type="Proteomes" id="UP000000763">
    <property type="component" value="Chromosome 4"/>
</dbReference>
<dbReference type="Proteomes" id="UP000007752">
    <property type="component" value="Chromosome 4"/>
</dbReference>
<dbReference type="Proteomes" id="UP000059680">
    <property type="component" value="Chromosome 4"/>
</dbReference>
<dbReference type="GO" id="GO:0016020">
    <property type="term" value="C:membrane"/>
    <property type="evidence" value="ECO:0000318"/>
    <property type="project" value="GO_Central"/>
</dbReference>
<dbReference type="GO" id="GO:0005774">
    <property type="term" value="C:vacuolar membrane"/>
    <property type="evidence" value="ECO:0007669"/>
    <property type="project" value="UniProtKB-SubCell"/>
</dbReference>
<dbReference type="GO" id="GO:0005381">
    <property type="term" value="F:iron ion transmembrane transporter activity"/>
    <property type="evidence" value="ECO:0000318"/>
    <property type="project" value="GO_Central"/>
</dbReference>
<dbReference type="GO" id="GO:0005384">
    <property type="term" value="F:manganese ion transmembrane transporter activity"/>
    <property type="evidence" value="ECO:0000318"/>
    <property type="project" value="GO_Central"/>
</dbReference>
<dbReference type="GO" id="GO:0030026">
    <property type="term" value="P:intracellular manganese ion homeostasis"/>
    <property type="evidence" value="ECO:0000318"/>
    <property type="project" value="GO_Central"/>
</dbReference>
<dbReference type="InterPro" id="IPR008217">
    <property type="entry name" value="Ccc1_fam"/>
</dbReference>
<dbReference type="PANTHER" id="PTHR31851">
    <property type="entry name" value="FE(2+)/MN(2+) TRANSPORTER PCL1"/>
    <property type="match status" value="1"/>
</dbReference>
<dbReference type="Pfam" id="PF01988">
    <property type="entry name" value="VIT1"/>
    <property type="match status" value="2"/>
</dbReference>
<evidence type="ECO:0000250" key="1">
    <source>
        <dbReference type="UniProtKB" id="Q6MWE5"/>
    </source>
</evidence>
<evidence type="ECO:0000250" key="2">
    <source>
        <dbReference type="UniProtKB" id="Q9LPU9"/>
    </source>
</evidence>
<evidence type="ECO:0000255" key="3"/>
<evidence type="ECO:0000305" key="4"/>
<evidence type="ECO:0000312" key="5">
    <source>
        <dbReference type="EMBL" id="BAS91743.1"/>
    </source>
</evidence>
<evidence type="ECO:0000312" key="6">
    <source>
        <dbReference type="EMBL" id="CAD41933.2"/>
    </source>
</evidence>
<evidence type="ECO:0000312" key="7">
    <source>
        <dbReference type="EMBL" id="EAZ32489.1"/>
    </source>
</evidence>
<protein>
    <recommendedName>
        <fullName evidence="4">Vacuolar iron transporter homolog 5</fullName>
    </recommendedName>
    <alternativeName>
        <fullName evidence="4">Protein NODULIN-LIKE 5</fullName>
    </alternativeName>
</protein>
<name>VITH5_ORYSJ</name>
<proteinExistence type="evidence at transcript level"/>
<gene>
    <name evidence="5" type="ordered locus">Os04g0686800</name>
    <name evidence="4" type="ordered locus">LOC_Os04g59020</name>
    <name evidence="7" type="ORF">OsJ_16707</name>
    <name evidence="6" type="ORF">OSJNBa0070M12.11</name>
</gene>
<keyword id="KW-0406">Ion transport</keyword>
<keyword id="KW-0408">Iron</keyword>
<keyword id="KW-0410">Iron transport</keyword>
<keyword id="KW-0472">Membrane</keyword>
<keyword id="KW-1185">Reference proteome</keyword>
<keyword id="KW-0812">Transmembrane</keyword>
<keyword id="KW-1133">Transmembrane helix</keyword>
<keyword id="KW-0813">Transport</keyword>
<keyword id="KW-0926">Vacuole</keyword>
<accession>Q7XTL7</accession>
<accession>A3AYV0</accession>
<accession>Q0J8U3</accession>
<comment type="function">
    <text evidence="1">Probable vacuolar iron transporter that may be involved in the regulation of iron distribution throughout the plant.</text>
</comment>
<comment type="catalytic activity">
    <reaction evidence="2">
        <text>Fe(2+)(in) = Fe(2+)(out)</text>
        <dbReference type="Rhea" id="RHEA:28486"/>
        <dbReference type="ChEBI" id="CHEBI:29033"/>
    </reaction>
    <physiologicalReaction direction="left-to-right" evidence="4">
        <dbReference type="Rhea" id="RHEA:28487"/>
    </physiologicalReaction>
</comment>
<comment type="subcellular location">
    <subcellularLocation>
        <location evidence="1">Vacuole membrane</location>
        <topology evidence="3">Multi-pass membrane protein</topology>
    </subcellularLocation>
</comment>
<comment type="similarity">
    <text evidence="4">Belongs to the CCC1 family.</text>
</comment>
<comment type="sequence caution" evidence="4">
    <conflict type="frameshift">
        <sequence resource="EMBL-CDS" id="BAF16244"/>
    </conflict>
</comment>
<comment type="sequence caution" evidence="4">
    <conflict type="frameshift">
        <sequence resource="EMBL-CDS" id="CAD41933"/>
    </conflict>
</comment>
<sequence length="208" mass="20981">MAAMMNNERSSSNKLQVDAENPAAVGDELDLAARANWLRAAVLGANDGLVSTASLMLGVGAVKAEARAMVISGFAGLLAGACSMAIGEFVSVCSQRDVELAQLERDGKRGGEEEKALPSPAQAAAASAMAFSVGAVVPLLAAGFIVNYRLRIAVVVAVASVALAAFGCVGAVLGRAAVARSSARVVLGGWAAMGITFGLMRLFKASGI</sequence>
<organism>
    <name type="scientific">Oryza sativa subsp. japonica</name>
    <name type="common">Rice</name>
    <dbReference type="NCBI Taxonomy" id="39947"/>
    <lineage>
        <taxon>Eukaryota</taxon>
        <taxon>Viridiplantae</taxon>
        <taxon>Streptophyta</taxon>
        <taxon>Embryophyta</taxon>
        <taxon>Tracheophyta</taxon>
        <taxon>Spermatophyta</taxon>
        <taxon>Magnoliopsida</taxon>
        <taxon>Liliopsida</taxon>
        <taxon>Poales</taxon>
        <taxon>Poaceae</taxon>
        <taxon>BOP clade</taxon>
        <taxon>Oryzoideae</taxon>
        <taxon>Oryzeae</taxon>
        <taxon>Oryzinae</taxon>
        <taxon>Oryza</taxon>
        <taxon>Oryza sativa</taxon>
    </lineage>
</organism>